<keyword id="KW-0687">Ribonucleoprotein</keyword>
<keyword id="KW-0689">Ribosomal protein</keyword>
<keyword id="KW-0694">RNA-binding</keyword>
<keyword id="KW-0699">rRNA-binding</keyword>
<reference key="1">
    <citation type="submission" date="2007-05" db="EMBL/GenBank/DDBJ databases">
        <title>Complete sequence of Pseudomonas putida F1.</title>
        <authorList>
            <consortium name="US DOE Joint Genome Institute"/>
            <person name="Copeland A."/>
            <person name="Lucas S."/>
            <person name="Lapidus A."/>
            <person name="Barry K."/>
            <person name="Detter J.C."/>
            <person name="Glavina del Rio T."/>
            <person name="Hammon N."/>
            <person name="Israni S."/>
            <person name="Dalin E."/>
            <person name="Tice H."/>
            <person name="Pitluck S."/>
            <person name="Chain P."/>
            <person name="Malfatti S."/>
            <person name="Shin M."/>
            <person name="Vergez L."/>
            <person name="Schmutz J."/>
            <person name="Larimer F."/>
            <person name="Land M."/>
            <person name="Hauser L."/>
            <person name="Kyrpides N."/>
            <person name="Lykidis A."/>
            <person name="Parales R."/>
            <person name="Richardson P."/>
        </authorList>
    </citation>
    <scope>NUCLEOTIDE SEQUENCE [LARGE SCALE GENOMIC DNA]</scope>
    <source>
        <strain>ATCC 700007 / DSM 6899 / JCM 31910 / BCRC 17059 / LMG 24140 / F1</strain>
    </source>
</reference>
<name>RS6_PSEP1</name>
<accession>A5W9R8</accession>
<evidence type="ECO:0000255" key="1">
    <source>
        <dbReference type="HAMAP-Rule" id="MF_00360"/>
    </source>
</evidence>
<evidence type="ECO:0000256" key="2">
    <source>
        <dbReference type="SAM" id="MobiDB-lite"/>
    </source>
</evidence>
<evidence type="ECO:0000305" key="3"/>
<dbReference type="EMBL" id="CP000712">
    <property type="protein sequence ID" value="ABQ80878.1"/>
    <property type="molecule type" value="Genomic_DNA"/>
</dbReference>
<dbReference type="SMR" id="A5W9R8"/>
<dbReference type="KEGG" id="ppf:Pput_4758"/>
<dbReference type="eggNOG" id="COG0360">
    <property type="taxonomic scope" value="Bacteria"/>
</dbReference>
<dbReference type="HOGENOM" id="CLU_113441_6_1_6"/>
<dbReference type="GO" id="GO:0022627">
    <property type="term" value="C:cytosolic small ribosomal subunit"/>
    <property type="evidence" value="ECO:0007669"/>
    <property type="project" value="TreeGrafter"/>
</dbReference>
<dbReference type="GO" id="GO:0070181">
    <property type="term" value="F:small ribosomal subunit rRNA binding"/>
    <property type="evidence" value="ECO:0007669"/>
    <property type="project" value="TreeGrafter"/>
</dbReference>
<dbReference type="GO" id="GO:0003735">
    <property type="term" value="F:structural constituent of ribosome"/>
    <property type="evidence" value="ECO:0007669"/>
    <property type="project" value="InterPro"/>
</dbReference>
<dbReference type="GO" id="GO:0006412">
    <property type="term" value="P:translation"/>
    <property type="evidence" value="ECO:0007669"/>
    <property type="project" value="UniProtKB-UniRule"/>
</dbReference>
<dbReference type="CDD" id="cd00473">
    <property type="entry name" value="bS6"/>
    <property type="match status" value="1"/>
</dbReference>
<dbReference type="FunFam" id="3.30.70.60:FF:000003">
    <property type="entry name" value="30S ribosomal protein S6"/>
    <property type="match status" value="1"/>
</dbReference>
<dbReference type="Gene3D" id="3.30.70.60">
    <property type="match status" value="1"/>
</dbReference>
<dbReference type="HAMAP" id="MF_00360">
    <property type="entry name" value="Ribosomal_bS6"/>
    <property type="match status" value="1"/>
</dbReference>
<dbReference type="InterPro" id="IPR000529">
    <property type="entry name" value="Ribosomal_bS6"/>
</dbReference>
<dbReference type="InterPro" id="IPR020815">
    <property type="entry name" value="Ribosomal_bS6_CS"/>
</dbReference>
<dbReference type="InterPro" id="IPR035980">
    <property type="entry name" value="Ribosomal_bS6_sf"/>
</dbReference>
<dbReference type="InterPro" id="IPR020814">
    <property type="entry name" value="Ribosomal_S6_plastid/chlpt"/>
</dbReference>
<dbReference type="InterPro" id="IPR014717">
    <property type="entry name" value="Transl_elong_EF1B/ribsomal_bS6"/>
</dbReference>
<dbReference type="NCBIfam" id="TIGR00166">
    <property type="entry name" value="S6"/>
    <property type="match status" value="1"/>
</dbReference>
<dbReference type="PANTHER" id="PTHR21011">
    <property type="entry name" value="MITOCHONDRIAL 28S RIBOSOMAL PROTEIN S6"/>
    <property type="match status" value="1"/>
</dbReference>
<dbReference type="PANTHER" id="PTHR21011:SF1">
    <property type="entry name" value="SMALL RIBOSOMAL SUBUNIT PROTEIN BS6M"/>
    <property type="match status" value="1"/>
</dbReference>
<dbReference type="Pfam" id="PF01250">
    <property type="entry name" value="Ribosomal_S6"/>
    <property type="match status" value="1"/>
</dbReference>
<dbReference type="SUPFAM" id="SSF54995">
    <property type="entry name" value="Ribosomal protein S6"/>
    <property type="match status" value="1"/>
</dbReference>
<dbReference type="PROSITE" id="PS01048">
    <property type="entry name" value="RIBOSOMAL_S6"/>
    <property type="match status" value="1"/>
</dbReference>
<organism>
    <name type="scientific">Pseudomonas putida (strain ATCC 700007 / DSM 6899 / JCM 31910 / BCRC 17059 / LMG 24140 / F1)</name>
    <dbReference type="NCBI Taxonomy" id="351746"/>
    <lineage>
        <taxon>Bacteria</taxon>
        <taxon>Pseudomonadati</taxon>
        <taxon>Pseudomonadota</taxon>
        <taxon>Gammaproteobacteria</taxon>
        <taxon>Pseudomonadales</taxon>
        <taxon>Pseudomonadaceae</taxon>
        <taxon>Pseudomonas</taxon>
    </lineage>
</organism>
<sequence>MRHYEIIFLVHPDQSEQVGGMVERYTKLIEEDGGKIHRLEDWGRRQLAYAINNVHKAHYVMLNVECTGKALAELEDNFRYNDAVIRNLVIRRDEAVTGQSEMLKAEENRSERRERRERPEHADSAEGDDSNDSDSSDNADE</sequence>
<comment type="function">
    <text evidence="1">Binds together with bS18 to 16S ribosomal RNA.</text>
</comment>
<comment type="similarity">
    <text evidence="1">Belongs to the bacterial ribosomal protein bS6 family.</text>
</comment>
<gene>
    <name evidence="1" type="primary">rpsF</name>
    <name type="ordered locus">Pput_4758</name>
</gene>
<proteinExistence type="inferred from homology"/>
<protein>
    <recommendedName>
        <fullName evidence="1">Small ribosomal subunit protein bS6</fullName>
    </recommendedName>
    <alternativeName>
        <fullName evidence="3">30S ribosomal protein S6</fullName>
    </alternativeName>
</protein>
<feature type="chain" id="PRO_1000005320" description="Small ribosomal subunit protein bS6">
    <location>
        <begin position="1"/>
        <end position="141"/>
    </location>
</feature>
<feature type="region of interest" description="Disordered" evidence="2">
    <location>
        <begin position="96"/>
        <end position="141"/>
    </location>
</feature>
<feature type="compositionally biased region" description="Basic and acidic residues" evidence="2">
    <location>
        <begin position="103"/>
        <end position="124"/>
    </location>
</feature>
<feature type="compositionally biased region" description="Acidic residues" evidence="2">
    <location>
        <begin position="125"/>
        <end position="141"/>
    </location>
</feature>